<reference key="1">
    <citation type="journal article" date="2005" name="DNA Res.">
        <title>Complete genome sequence of the facultative anaerobic magnetotactic bacterium Magnetospirillum sp. strain AMB-1.</title>
        <authorList>
            <person name="Matsunaga T."/>
            <person name="Okamura Y."/>
            <person name="Fukuda Y."/>
            <person name="Wahyudi A.T."/>
            <person name="Murase Y."/>
            <person name="Takeyama H."/>
        </authorList>
    </citation>
    <scope>NUCLEOTIDE SEQUENCE [LARGE SCALE GENOMIC DNA]</scope>
    <source>
        <strain>ATCC 700264 / AMB-1</strain>
    </source>
</reference>
<keyword id="KW-0131">Cell cycle</keyword>
<keyword id="KW-0132">Cell division</keyword>
<keyword id="KW-0997">Cell inner membrane</keyword>
<keyword id="KW-1003">Cell membrane</keyword>
<keyword id="KW-0133">Cell shape</keyword>
<keyword id="KW-0961">Cell wall biogenesis/degradation</keyword>
<keyword id="KW-0460">Magnesium</keyword>
<keyword id="KW-0472">Membrane</keyword>
<keyword id="KW-0479">Metal-binding</keyword>
<keyword id="KW-0573">Peptidoglycan synthesis</keyword>
<keyword id="KW-0808">Transferase</keyword>
<keyword id="KW-0812">Transmembrane</keyword>
<keyword id="KW-1133">Transmembrane helix</keyword>
<comment type="function">
    <text evidence="1">Catalyzes the initial step of the lipid cycle reactions in the biosynthesis of the cell wall peptidoglycan: transfers peptidoglycan precursor phospho-MurNAc-pentapeptide from UDP-MurNAc-pentapeptide onto the lipid carrier undecaprenyl phosphate, yielding undecaprenyl-pyrophosphoryl-MurNAc-pentapeptide, known as lipid I.</text>
</comment>
<comment type="catalytic activity">
    <reaction evidence="1">
        <text>UDP-N-acetyl-alpha-D-muramoyl-L-alanyl-gamma-D-glutamyl-meso-2,6-diaminopimeloyl-D-alanyl-D-alanine + di-trans,octa-cis-undecaprenyl phosphate = di-trans,octa-cis-undecaprenyl diphospho-N-acetyl-alpha-D-muramoyl-L-alanyl-D-glutamyl-meso-2,6-diaminopimeloyl-D-alanyl-D-alanine + UMP</text>
        <dbReference type="Rhea" id="RHEA:28386"/>
        <dbReference type="ChEBI" id="CHEBI:57865"/>
        <dbReference type="ChEBI" id="CHEBI:60392"/>
        <dbReference type="ChEBI" id="CHEBI:61386"/>
        <dbReference type="ChEBI" id="CHEBI:61387"/>
        <dbReference type="EC" id="2.7.8.13"/>
    </reaction>
</comment>
<comment type="cofactor">
    <cofactor evidence="1">
        <name>Mg(2+)</name>
        <dbReference type="ChEBI" id="CHEBI:18420"/>
    </cofactor>
</comment>
<comment type="pathway">
    <text evidence="1">Cell wall biogenesis; peptidoglycan biosynthesis.</text>
</comment>
<comment type="subcellular location">
    <subcellularLocation>
        <location evidence="1">Cell inner membrane</location>
        <topology evidence="1">Multi-pass membrane protein</topology>
    </subcellularLocation>
</comment>
<comment type="similarity">
    <text evidence="1">Belongs to the glycosyltransferase 4 family. MraY subfamily.</text>
</comment>
<accession>Q2W0H6</accession>
<organism>
    <name type="scientific">Paramagnetospirillum magneticum (strain ATCC 700264 / AMB-1)</name>
    <name type="common">Magnetospirillum magneticum</name>
    <dbReference type="NCBI Taxonomy" id="342108"/>
    <lineage>
        <taxon>Bacteria</taxon>
        <taxon>Pseudomonadati</taxon>
        <taxon>Pseudomonadota</taxon>
        <taxon>Alphaproteobacteria</taxon>
        <taxon>Rhodospirillales</taxon>
        <taxon>Magnetospirillaceae</taxon>
        <taxon>Paramagnetospirillum</taxon>
    </lineage>
</organism>
<sequence>MLYNLLYPLADQVPLFNLFKYLTFRTGGAVLTALIVAFLVGPRIIAWLRQWQKQGQPIRADGPESHLLTKKGTPTMGGFMILLALSVSTLLWADLRNQYVWIVLLVTLGYGLIGFWDDYLKVSKKNPKGVPGKAKLVAEIAIALAAAAWVWSLQREPLAGALAVPFFKTVLLQLSWFYLPFAVFIIVGAGNAVNLTDGLDGLAIVPVMIASGVFAIFSYLVGHAVFANYLQIHYVSGSGELAVFCGALVGAGLGFLWFNAPPAMVFMGDTGSLALGGALGAISVVTKHELVLGIVGGLFVLETVSVIVQVASFKLTGKRVFRMAPLHHHFEKKGWAEPTVVIRFWIIATILALAGLATLKLR</sequence>
<proteinExistence type="inferred from homology"/>
<evidence type="ECO:0000255" key="1">
    <source>
        <dbReference type="HAMAP-Rule" id="MF_00038"/>
    </source>
</evidence>
<dbReference type="EC" id="2.7.8.13" evidence="1"/>
<dbReference type="EMBL" id="AP007255">
    <property type="protein sequence ID" value="BAE52649.1"/>
    <property type="molecule type" value="Genomic_DNA"/>
</dbReference>
<dbReference type="RefSeq" id="WP_011386199.1">
    <property type="nucleotide sequence ID" value="NC_007626.1"/>
</dbReference>
<dbReference type="SMR" id="Q2W0H6"/>
<dbReference type="STRING" id="342108.amb3845"/>
<dbReference type="KEGG" id="mag:amb3845"/>
<dbReference type="HOGENOM" id="CLU_023982_0_0_5"/>
<dbReference type="OrthoDB" id="9805475at2"/>
<dbReference type="UniPathway" id="UPA00219"/>
<dbReference type="Proteomes" id="UP000007058">
    <property type="component" value="Chromosome"/>
</dbReference>
<dbReference type="GO" id="GO:0005886">
    <property type="term" value="C:plasma membrane"/>
    <property type="evidence" value="ECO:0007669"/>
    <property type="project" value="UniProtKB-SubCell"/>
</dbReference>
<dbReference type="GO" id="GO:0046872">
    <property type="term" value="F:metal ion binding"/>
    <property type="evidence" value="ECO:0007669"/>
    <property type="project" value="UniProtKB-KW"/>
</dbReference>
<dbReference type="GO" id="GO:0008963">
    <property type="term" value="F:phospho-N-acetylmuramoyl-pentapeptide-transferase activity"/>
    <property type="evidence" value="ECO:0007669"/>
    <property type="project" value="UniProtKB-UniRule"/>
</dbReference>
<dbReference type="GO" id="GO:0051992">
    <property type="term" value="F:UDP-N-acetylmuramoyl-L-alanyl-D-glutamyl-meso-2,6-diaminopimelyl-D-alanyl-D-alanine:undecaprenyl-phosphate transferase activity"/>
    <property type="evidence" value="ECO:0007669"/>
    <property type="project" value="RHEA"/>
</dbReference>
<dbReference type="GO" id="GO:0051301">
    <property type="term" value="P:cell division"/>
    <property type="evidence" value="ECO:0007669"/>
    <property type="project" value="UniProtKB-KW"/>
</dbReference>
<dbReference type="GO" id="GO:0071555">
    <property type="term" value="P:cell wall organization"/>
    <property type="evidence" value="ECO:0007669"/>
    <property type="project" value="UniProtKB-KW"/>
</dbReference>
<dbReference type="GO" id="GO:0009252">
    <property type="term" value="P:peptidoglycan biosynthetic process"/>
    <property type="evidence" value="ECO:0007669"/>
    <property type="project" value="UniProtKB-UniRule"/>
</dbReference>
<dbReference type="GO" id="GO:0008360">
    <property type="term" value="P:regulation of cell shape"/>
    <property type="evidence" value="ECO:0007669"/>
    <property type="project" value="UniProtKB-KW"/>
</dbReference>
<dbReference type="CDD" id="cd06852">
    <property type="entry name" value="GT_MraY"/>
    <property type="match status" value="1"/>
</dbReference>
<dbReference type="HAMAP" id="MF_00038">
    <property type="entry name" value="MraY"/>
    <property type="match status" value="1"/>
</dbReference>
<dbReference type="InterPro" id="IPR000715">
    <property type="entry name" value="Glycosyl_transferase_4"/>
</dbReference>
<dbReference type="InterPro" id="IPR003524">
    <property type="entry name" value="PNAcMuramoyl-5peptid_Trfase"/>
</dbReference>
<dbReference type="InterPro" id="IPR018480">
    <property type="entry name" value="PNAcMuramoyl-5peptid_Trfase_CS"/>
</dbReference>
<dbReference type="NCBIfam" id="TIGR00445">
    <property type="entry name" value="mraY"/>
    <property type="match status" value="1"/>
</dbReference>
<dbReference type="PANTHER" id="PTHR22926">
    <property type="entry name" value="PHOSPHO-N-ACETYLMURAMOYL-PENTAPEPTIDE-TRANSFERASE"/>
    <property type="match status" value="1"/>
</dbReference>
<dbReference type="PANTHER" id="PTHR22926:SF5">
    <property type="entry name" value="PHOSPHO-N-ACETYLMURAMOYL-PENTAPEPTIDE-TRANSFERASE HOMOLOG"/>
    <property type="match status" value="1"/>
</dbReference>
<dbReference type="Pfam" id="PF00953">
    <property type="entry name" value="Glycos_transf_4"/>
    <property type="match status" value="1"/>
</dbReference>
<dbReference type="PROSITE" id="PS01348">
    <property type="entry name" value="MRAY_2"/>
    <property type="match status" value="1"/>
</dbReference>
<feature type="chain" id="PRO_0000235456" description="Phospho-N-acetylmuramoyl-pentapeptide-transferase">
    <location>
        <begin position="1"/>
        <end position="362"/>
    </location>
</feature>
<feature type="transmembrane region" description="Helical" evidence="1">
    <location>
        <begin position="28"/>
        <end position="48"/>
    </location>
</feature>
<feature type="transmembrane region" description="Helical" evidence="1">
    <location>
        <begin position="75"/>
        <end position="95"/>
    </location>
</feature>
<feature type="transmembrane region" description="Helical" evidence="1">
    <location>
        <begin position="100"/>
        <end position="120"/>
    </location>
</feature>
<feature type="transmembrane region" description="Helical" evidence="1">
    <location>
        <begin position="134"/>
        <end position="154"/>
    </location>
</feature>
<feature type="transmembrane region" description="Helical" evidence="1">
    <location>
        <begin position="170"/>
        <end position="190"/>
    </location>
</feature>
<feature type="transmembrane region" description="Helical" evidence="1">
    <location>
        <begin position="201"/>
        <end position="221"/>
    </location>
</feature>
<feature type="transmembrane region" description="Helical" evidence="1">
    <location>
        <begin position="241"/>
        <end position="261"/>
    </location>
</feature>
<feature type="transmembrane region" description="Helical" evidence="1">
    <location>
        <begin position="265"/>
        <end position="285"/>
    </location>
</feature>
<feature type="transmembrane region" description="Helical" evidence="1">
    <location>
        <begin position="290"/>
        <end position="310"/>
    </location>
</feature>
<feature type="transmembrane region" description="Helical" evidence="1">
    <location>
        <begin position="339"/>
        <end position="359"/>
    </location>
</feature>
<name>MRAY_PARM1</name>
<gene>
    <name evidence="1" type="primary">mraY</name>
    <name type="ordered locus">amb3845</name>
</gene>
<protein>
    <recommendedName>
        <fullName evidence="1">Phospho-N-acetylmuramoyl-pentapeptide-transferase</fullName>
        <ecNumber evidence="1">2.7.8.13</ecNumber>
    </recommendedName>
    <alternativeName>
        <fullName evidence="1">UDP-MurNAc-pentapeptide phosphotransferase</fullName>
    </alternativeName>
</protein>